<dbReference type="EMBL" id="CR857383">
    <property type="protein sequence ID" value="CAH89677.1"/>
    <property type="molecule type" value="mRNA"/>
</dbReference>
<dbReference type="RefSeq" id="NP_001124758.1">
    <property type="nucleotide sequence ID" value="NM_001131286.1"/>
</dbReference>
<dbReference type="SMR" id="Q5REY0"/>
<dbReference type="STRING" id="9601.ENSPPYP00000019496"/>
<dbReference type="MEROPS" id="M67.972"/>
<dbReference type="Ensembl" id="ENSPPYT00000020266.3">
    <property type="protein sequence ID" value="ENSPPYP00000019496.3"/>
    <property type="gene ID" value="ENSPPYG00000017397.3"/>
</dbReference>
<dbReference type="GeneID" id="100171609"/>
<dbReference type="KEGG" id="pon:100171609"/>
<dbReference type="CTD" id="10980"/>
<dbReference type="eggNOG" id="KOG3050">
    <property type="taxonomic scope" value="Eukaryota"/>
</dbReference>
<dbReference type="GeneTree" id="ENSGT00950000183073"/>
<dbReference type="InParanoid" id="Q5REY0"/>
<dbReference type="OrthoDB" id="1378at2759"/>
<dbReference type="Proteomes" id="UP000001595">
    <property type="component" value="Chromosome 7"/>
</dbReference>
<dbReference type="GO" id="GO:0008180">
    <property type="term" value="C:COP9 signalosome"/>
    <property type="evidence" value="ECO:0007669"/>
    <property type="project" value="UniProtKB-KW"/>
</dbReference>
<dbReference type="GO" id="GO:0005737">
    <property type="term" value="C:cytoplasm"/>
    <property type="evidence" value="ECO:0007669"/>
    <property type="project" value="UniProtKB-SubCell"/>
</dbReference>
<dbReference type="GO" id="GO:0008237">
    <property type="term" value="F:metallopeptidase activity"/>
    <property type="evidence" value="ECO:0007669"/>
    <property type="project" value="InterPro"/>
</dbReference>
<dbReference type="GO" id="GO:0000338">
    <property type="term" value="P:protein deneddylation"/>
    <property type="evidence" value="ECO:0007669"/>
    <property type="project" value="InterPro"/>
</dbReference>
<dbReference type="CDD" id="cd08063">
    <property type="entry name" value="MPN_CSN6"/>
    <property type="match status" value="1"/>
</dbReference>
<dbReference type="FunFam" id="3.40.140.10:FF:000017">
    <property type="entry name" value="COP9 signalosome complex subunit 6"/>
    <property type="match status" value="1"/>
</dbReference>
<dbReference type="Gene3D" id="3.40.140.10">
    <property type="entry name" value="Cytidine Deaminase, domain 2"/>
    <property type="match status" value="1"/>
</dbReference>
<dbReference type="InterPro" id="IPR024969">
    <property type="entry name" value="EIF3F/CSN6-like_C"/>
</dbReference>
<dbReference type="InterPro" id="IPR000555">
    <property type="entry name" value="JAMM/MPN+_dom"/>
</dbReference>
<dbReference type="InterPro" id="IPR037518">
    <property type="entry name" value="MPN"/>
</dbReference>
<dbReference type="InterPro" id="IPR033859">
    <property type="entry name" value="MPN_CSN6"/>
</dbReference>
<dbReference type="PANTHER" id="PTHR10540:SF8">
    <property type="entry name" value="COP9 SIGNALOSOME COMPLEX SUBUNIT 6"/>
    <property type="match status" value="1"/>
</dbReference>
<dbReference type="PANTHER" id="PTHR10540">
    <property type="entry name" value="EUKARYOTIC TRANSLATION INITIATION FACTOR 3 SUBUNIT F-RELATED"/>
    <property type="match status" value="1"/>
</dbReference>
<dbReference type="Pfam" id="PF01398">
    <property type="entry name" value="JAB"/>
    <property type="match status" value="1"/>
</dbReference>
<dbReference type="Pfam" id="PF13012">
    <property type="entry name" value="MitMem_reg"/>
    <property type="match status" value="1"/>
</dbReference>
<dbReference type="SMART" id="SM00232">
    <property type="entry name" value="JAB_MPN"/>
    <property type="match status" value="1"/>
</dbReference>
<dbReference type="PROSITE" id="PS50249">
    <property type="entry name" value="MPN"/>
    <property type="match status" value="1"/>
</dbReference>
<gene>
    <name type="primary">COPS6</name>
</gene>
<name>CSN6_PONAB</name>
<proteinExistence type="evidence at transcript level"/>
<keyword id="KW-0963">Cytoplasm</keyword>
<keyword id="KW-0539">Nucleus</keyword>
<keyword id="KW-1185">Reference proteome</keyword>
<keyword id="KW-0736">Signalosome</keyword>
<accession>Q5REY0</accession>
<sequence>MAAAAAAAAAATNGTGGSSGMEVDAAVVPSVMASGVTGSVSVALHPLVILNISDHWIRMRSQEGRPVQVIGALIGKQEGRNIEVMNSFELLSHTVEEKIIIDKEYYYTKEEQFKQVFKELEFLGWYTTGGPPDPSDIHVHKQVCEIIESPLFLKLNPMTKHTDLPVSVFESVIDIINGEATMLFAELTYTLATEEAERIGVDHVARMTATGSGENSTVAEHLIAQHSAIKMLHSRVKLILEYVKASEAGEVPFNHEILREAYALCHCLPVLSTDKFKTDFYDQCNDVGLMAYLGTITKTCNTMNQFVNKFNVLYDRQGIGRRMRGLFF</sequence>
<comment type="function">
    <text evidence="1">Component of the COP9 signalosome complex (CSN), a complex involved in various cellular and developmental processes (By similarity). The CSN complex is an essential regulator of the ubiquitin (Ubl) conjugation pathway by mediating the deneddylation of the cullin subunits of SCF-type E3 ligase complexes, leading to decrease the Ubl ligase activity of SCF-type complexes such as SCF, CSA or DDB2 (By similarity). The complex is also involved in phosphorylation of p53/TP53, c-jun/JUN, IkappaBalpha/NFKBIA, ITPK1 and IRF8, possibly via its association with CK2 and PKD kinases (By similarity). CSN-dependent phosphorylation of TP53 and JUN promotes and protects degradation by the Ubl system, respectively (By similarity). Has some glucocorticoid receptor-responsive activity (By similarity). Stabilizes COP1 through reducing COP1 auto-ubiquitination and decelerating COP1 turnover rate, hence regulates the ubiquitination of COP1 targets, including SFN (By similarity).</text>
</comment>
<comment type="subunit">
    <text evidence="1">Component of the CSN complex, composed of COPS1/GPS1, COPS2, COPS3, COPS4, COPS5, COPS6, COPS7 (COPS7A or COPS7B), COPS8 and COPS9 (By similarity). In the complex, it probably interacts directly with COPS2, COPS4, COPS5, COPS7 (COPS7A or COPS7B) and COPS9 (By similarity). Interacts with the translation initiation factor EIF3S6 (By similarity). Interacts weakly with RBX1 (By similarity). Directly interacts with COP1 and 14-3-3 protein sigma/SFN (By similarity). Interacts with ERCC6 (By similarity).</text>
</comment>
<comment type="subcellular location">
    <subcellularLocation>
        <location evidence="1">Cytoplasm</location>
    </subcellularLocation>
    <subcellularLocation>
        <location evidence="1">Nucleus</location>
    </subcellularLocation>
</comment>
<comment type="similarity">
    <text evidence="3">Belongs to the peptidase M67A family. CSN6 subfamily.</text>
</comment>
<comment type="caution">
    <text evidence="3">Although related to the peptidase M67A family, it lacks the JAMM motif that probably constitutes the catalytic center and therefore it probably does not have a protease activity.</text>
</comment>
<evidence type="ECO:0000250" key="1">
    <source>
        <dbReference type="UniProtKB" id="Q7L5N1"/>
    </source>
</evidence>
<evidence type="ECO:0000255" key="2">
    <source>
        <dbReference type="PROSITE-ProRule" id="PRU01182"/>
    </source>
</evidence>
<evidence type="ECO:0000305" key="3"/>
<feature type="chain" id="PRO_0000290581" description="COP9 signalosome complex subunit 6">
    <location>
        <begin position="1"/>
        <end position="328"/>
    </location>
</feature>
<feature type="domain" description="MPN" evidence="2">
    <location>
        <begin position="42"/>
        <end position="175"/>
    </location>
</feature>
<reference key="1">
    <citation type="submission" date="2004-11" db="EMBL/GenBank/DDBJ databases">
        <authorList>
            <consortium name="The German cDNA consortium"/>
        </authorList>
    </citation>
    <scope>NUCLEOTIDE SEQUENCE [LARGE SCALE MRNA]</scope>
    <source>
        <tissue>Heart</tissue>
    </source>
</reference>
<organism>
    <name type="scientific">Pongo abelii</name>
    <name type="common">Sumatran orangutan</name>
    <name type="synonym">Pongo pygmaeus abelii</name>
    <dbReference type="NCBI Taxonomy" id="9601"/>
    <lineage>
        <taxon>Eukaryota</taxon>
        <taxon>Metazoa</taxon>
        <taxon>Chordata</taxon>
        <taxon>Craniata</taxon>
        <taxon>Vertebrata</taxon>
        <taxon>Euteleostomi</taxon>
        <taxon>Mammalia</taxon>
        <taxon>Eutheria</taxon>
        <taxon>Euarchontoglires</taxon>
        <taxon>Primates</taxon>
        <taxon>Haplorrhini</taxon>
        <taxon>Catarrhini</taxon>
        <taxon>Hominidae</taxon>
        <taxon>Pongo</taxon>
    </lineage>
</organism>
<protein>
    <recommendedName>
        <fullName>COP9 signalosome complex subunit 6</fullName>
        <shortName>SGN6</shortName>
        <shortName>Signalosome subunit 6</shortName>
    </recommendedName>
</protein>